<feature type="chain" id="PRO_0000133739" description="Large ribosomal subunit protein uL13">
    <location>
        <begin position="1"/>
        <end position="141"/>
    </location>
</feature>
<evidence type="ECO:0000255" key="1">
    <source>
        <dbReference type="HAMAP-Rule" id="MF_01366"/>
    </source>
</evidence>
<evidence type="ECO:0000305" key="2"/>
<comment type="function">
    <text evidence="1">This protein is one of the early assembly proteins of the 50S ribosomal subunit, although it is not seen to bind rRNA by itself. It is important during the early stages of 50S assembly.</text>
</comment>
<comment type="subunit">
    <text evidence="1">Part of the 50S ribosomal subunit.</text>
</comment>
<comment type="similarity">
    <text evidence="1">Belongs to the universal ribosomal protein uL13 family.</text>
</comment>
<name>RL13_HELPY</name>
<organism>
    <name type="scientific">Helicobacter pylori (strain ATCC 700392 / 26695)</name>
    <name type="common">Campylobacter pylori</name>
    <dbReference type="NCBI Taxonomy" id="85962"/>
    <lineage>
        <taxon>Bacteria</taxon>
        <taxon>Pseudomonadati</taxon>
        <taxon>Campylobacterota</taxon>
        <taxon>Epsilonproteobacteria</taxon>
        <taxon>Campylobacterales</taxon>
        <taxon>Helicobacteraceae</taxon>
        <taxon>Helicobacter</taxon>
    </lineage>
</organism>
<reference key="1">
    <citation type="journal article" date="1997" name="Nature">
        <title>The complete genome sequence of the gastric pathogen Helicobacter pylori.</title>
        <authorList>
            <person name="Tomb J.-F."/>
            <person name="White O."/>
            <person name="Kerlavage A.R."/>
            <person name="Clayton R.A."/>
            <person name="Sutton G.G."/>
            <person name="Fleischmann R.D."/>
            <person name="Ketchum K.A."/>
            <person name="Klenk H.-P."/>
            <person name="Gill S.R."/>
            <person name="Dougherty B.A."/>
            <person name="Nelson K.E."/>
            <person name="Quackenbush J."/>
            <person name="Zhou L."/>
            <person name="Kirkness E.F."/>
            <person name="Peterson S.N."/>
            <person name="Loftus B.J."/>
            <person name="Richardson D.L."/>
            <person name="Dodson R.J."/>
            <person name="Khalak H.G."/>
            <person name="Glodek A."/>
            <person name="McKenney K."/>
            <person name="FitzGerald L.M."/>
            <person name="Lee N."/>
            <person name="Adams M.D."/>
            <person name="Hickey E.K."/>
            <person name="Berg D.E."/>
            <person name="Gocayne J.D."/>
            <person name="Utterback T.R."/>
            <person name="Peterson J.D."/>
            <person name="Kelley J.M."/>
            <person name="Cotton M.D."/>
            <person name="Weidman J.F."/>
            <person name="Fujii C."/>
            <person name="Bowman C."/>
            <person name="Watthey L."/>
            <person name="Wallin E."/>
            <person name="Hayes W.S."/>
            <person name="Borodovsky M."/>
            <person name="Karp P.D."/>
            <person name="Smith H.O."/>
            <person name="Fraser C.M."/>
            <person name="Venter J.C."/>
        </authorList>
    </citation>
    <scope>NUCLEOTIDE SEQUENCE [LARGE SCALE GENOMIC DNA]</scope>
    <source>
        <strain>ATCC 700392 / 26695</strain>
    </source>
</reference>
<gene>
    <name evidence="1" type="primary">rplM</name>
    <name type="ordered locus">HP_0084</name>
</gene>
<sequence length="141" mass="16112">MTKTAKVNDIVRDWVVLDAKDKVFGRLITEIAVLLRGKHRPFYTPNVDCGDFVVVINANKVKFSGMKLEDKEYFTHSGYFGSTKSKTLQEMLEKAPEKLYHLAVRGMLPKTKLGKAMIKKLKVYRDDKHPHTAQTSKKDAK</sequence>
<proteinExistence type="inferred from homology"/>
<keyword id="KW-1185">Reference proteome</keyword>
<keyword id="KW-0687">Ribonucleoprotein</keyword>
<keyword id="KW-0689">Ribosomal protein</keyword>
<accession>P56038</accession>
<dbReference type="EMBL" id="AE000511">
    <property type="protein sequence ID" value="AAD07154.1"/>
    <property type="molecule type" value="Genomic_DNA"/>
</dbReference>
<dbReference type="PIR" id="D64530">
    <property type="entry name" value="D64530"/>
</dbReference>
<dbReference type="RefSeq" id="NP_206884.1">
    <property type="nucleotide sequence ID" value="NC_000915.1"/>
</dbReference>
<dbReference type="RefSeq" id="WP_000167671.1">
    <property type="nucleotide sequence ID" value="NC_018939.1"/>
</dbReference>
<dbReference type="SMR" id="P56038"/>
<dbReference type="DIP" id="DIP-3161N"/>
<dbReference type="FunCoup" id="P56038">
    <property type="interactions" value="437"/>
</dbReference>
<dbReference type="IntAct" id="P56038">
    <property type="interactions" value="2"/>
</dbReference>
<dbReference type="MINT" id="P56038"/>
<dbReference type="STRING" id="85962.HP_0084"/>
<dbReference type="PaxDb" id="85962-C694_00410"/>
<dbReference type="EnsemblBacteria" id="AAD07154">
    <property type="protein sequence ID" value="AAD07154"/>
    <property type="gene ID" value="HP_0084"/>
</dbReference>
<dbReference type="KEGG" id="heo:C694_00410"/>
<dbReference type="KEGG" id="hpy:HP_0084"/>
<dbReference type="PATRIC" id="fig|85962.47.peg.90"/>
<dbReference type="eggNOG" id="COG0102">
    <property type="taxonomic scope" value="Bacteria"/>
</dbReference>
<dbReference type="InParanoid" id="P56038"/>
<dbReference type="OrthoDB" id="9801330at2"/>
<dbReference type="PhylomeDB" id="P56038"/>
<dbReference type="Proteomes" id="UP000000429">
    <property type="component" value="Chromosome"/>
</dbReference>
<dbReference type="GO" id="GO:0022625">
    <property type="term" value="C:cytosolic large ribosomal subunit"/>
    <property type="evidence" value="ECO:0000318"/>
    <property type="project" value="GO_Central"/>
</dbReference>
<dbReference type="GO" id="GO:0005840">
    <property type="term" value="C:ribosome"/>
    <property type="evidence" value="ECO:0000318"/>
    <property type="project" value="GO_Central"/>
</dbReference>
<dbReference type="GO" id="GO:0003729">
    <property type="term" value="F:mRNA binding"/>
    <property type="evidence" value="ECO:0000318"/>
    <property type="project" value="GO_Central"/>
</dbReference>
<dbReference type="GO" id="GO:0003735">
    <property type="term" value="F:structural constituent of ribosome"/>
    <property type="evidence" value="ECO:0000318"/>
    <property type="project" value="GO_Central"/>
</dbReference>
<dbReference type="GO" id="GO:0017148">
    <property type="term" value="P:negative regulation of translation"/>
    <property type="evidence" value="ECO:0000318"/>
    <property type="project" value="GO_Central"/>
</dbReference>
<dbReference type="GO" id="GO:0006412">
    <property type="term" value="P:translation"/>
    <property type="evidence" value="ECO:0007669"/>
    <property type="project" value="UniProtKB-UniRule"/>
</dbReference>
<dbReference type="CDD" id="cd00392">
    <property type="entry name" value="Ribosomal_L13"/>
    <property type="match status" value="1"/>
</dbReference>
<dbReference type="FunFam" id="3.90.1180.10:FF:000004">
    <property type="entry name" value="50S ribosomal protein L13"/>
    <property type="match status" value="1"/>
</dbReference>
<dbReference type="Gene3D" id="3.90.1180.10">
    <property type="entry name" value="Ribosomal protein L13"/>
    <property type="match status" value="1"/>
</dbReference>
<dbReference type="HAMAP" id="MF_01366">
    <property type="entry name" value="Ribosomal_uL13"/>
    <property type="match status" value="1"/>
</dbReference>
<dbReference type="InterPro" id="IPR005822">
    <property type="entry name" value="Ribosomal_uL13"/>
</dbReference>
<dbReference type="InterPro" id="IPR005823">
    <property type="entry name" value="Ribosomal_uL13_bac-type"/>
</dbReference>
<dbReference type="InterPro" id="IPR023563">
    <property type="entry name" value="Ribosomal_uL13_CS"/>
</dbReference>
<dbReference type="InterPro" id="IPR036899">
    <property type="entry name" value="Ribosomal_uL13_sf"/>
</dbReference>
<dbReference type="NCBIfam" id="TIGR01066">
    <property type="entry name" value="rplM_bact"/>
    <property type="match status" value="1"/>
</dbReference>
<dbReference type="PANTHER" id="PTHR11545:SF2">
    <property type="entry name" value="LARGE RIBOSOMAL SUBUNIT PROTEIN UL13M"/>
    <property type="match status" value="1"/>
</dbReference>
<dbReference type="PANTHER" id="PTHR11545">
    <property type="entry name" value="RIBOSOMAL PROTEIN L13"/>
    <property type="match status" value="1"/>
</dbReference>
<dbReference type="Pfam" id="PF00572">
    <property type="entry name" value="Ribosomal_L13"/>
    <property type="match status" value="1"/>
</dbReference>
<dbReference type="PIRSF" id="PIRSF002181">
    <property type="entry name" value="Ribosomal_L13"/>
    <property type="match status" value="1"/>
</dbReference>
<dbReference type="SUPFAM" id="SSF52161">
    <property type="entry name" value="Ribosomal protein L13"/>
    <property type="match status" value="1"/>
</dbReference>
<dbReference type="PROSITE" id="PS00783">
    <property type="entry name" value="RIBOSOMAL_L13"/>
    <property type="match status" value="1"/>
</dbReference>
<protein>
    <recommendedName>
        <fullName evidence="1">Large ribosomal subunit protein uL13</fullName>
    </recommendedName>
    <alternativeName>
        <fullName evidence="2">50S ribosomal protein L13</fullName>
    </alternativeName>
</protein>